<protein>
    <recommendedName>
        <fullName evidence="1">Ribosome-recycling factor</fullName>
        <shortName evidence="1">RRF</shortName>
    </recommendedName>
    <alternativeName>
        <fullName evidence="1">Ribosome-releasing factor</fullName>
    </alternativeName>
</protein>
<organism>
    <name type="scientific">Neorickettsia sennetsu (strain ATCC VR-367 / Miyayama)</name>
    <name type="common">Ehrlichia sennetsu</name>
    <dbReference type="NCBI Taxonomy" id="222891"/>
    <lineage>
        <taxon>Bacteria</taxon>
        <taxon>Pseudomonadati</taxon>
        <taxon>Pseudomonadota</taxon>
        <taxon>Alphaproteobacteria</taxon>
        <taxon>Rickettsiales</taxon>
        <taxon>Anaplasmataceae</taxon>
        <taxon>Neorickettsia</taxon>
    </lineage>
</organism>
<feature type="chain" id="PRO_1000003209" description="Ribosome-recycling factor">
    <location>
        <begin position="1"/>
        <end position="185"/>
    </location>
</feature>
<reference key="1">
    <citation type="journal article" date="2006" name="PLoS Genet.">
        <title>Comparative genomics of emerging human ehrlichiosis agents.</title>
        <authorList>
            <person name="Dunning Hotopp J.C."/>
            <person name="Lin M."/>
            <person name="Madupu R."/>
            <person name="Crabtree J."/>
            <person name="Angiuoli S.V."/>
            <person name="Eisen J.A."/>
            <person name="Seshadri R."/>
            <person name="Ren Q."/>
            <person name="Wu M."/>
            <person name="Utterback T.R."/>
            <person name="Smith S."/>
            <person name="Lewis M."/>
            <person name="Khouri H."/>
            <person name="Zhang C."/>
            <person name="Niu H."/>
            <person name="Lin Q."/>
            <person name="Ohashi N."/>
            <person name="Zhi N."/>
            <person name="Nelson W.C."/>
            <person name="Brinkac L.M."/>
            <person name="Dodson R.J."/>
            <person name="Rosovitz M.J."/>
            <person name="Sundaram J.P."/>
            <person name="Daugherty S.C."/>
            <person name="Davidsen T."/>
            <person name="Durkin A.S."/>
            <person name="Gwinn M.L."/>
            <person name="Haft D.H."/>
            <person name="Selengut J.D."/>
            <person name="Sullivan S.A."/>
            <person name="Zafar N."/>
            <person name="Zhou L."/>
            <person name="Benahmed F."/>
            <person name="Forberger H."/>
            <person name="Halpin R."/>
            <person name="Mulligan S."/>
            <person name="Robinson J."/>
            <person name="White O."/>
            <person name="Rikihisa Y."/>
            <person name="Tettelin H."/>
        </authorList>
    </citation>
    <scope>NUCLEOTIDE SEQUENCE [LARGE SCALE GENOMIC DNA]</scope>
    <source>
        <strain>ATCC VR-367 / Miyayama</strain>
    </source>
</reference>
<comment type="function">
    <text evidence="1">Responsible for the release of ribosomes from messenger RNA at the termination of protein biosynthesis. May increase the efficiency of translation by recycling ribosomes from one round of translation to another.</text>
</comment>
<comment type="subcellular location">
    <subcellularLocation>
        <location evidence="1">Cytoplasm</location>
    </subcellularLocation>
</comment>
<comment type="similarity">
    <text evidence="1">Belongs to the RRF family.</text>
</comment>
<sequence>MLEDVIKETNDKLRSSYEVFLSDLKGIRSGSLSVSILDGVIVSTHMGKLRLNQVASLSVVNNKMLSVQVWDKSTVGAVKDAILTSNLGMNPIVEGSVLRLPVPDLTEERRKELVKVLKKYGDRAKVAVRNIRRDAISRIKVLEKAKEISENDMHALLKKIDKIISEEDARIDDAVSKKETDILKV</sequence>
<gene>
    <name evidence="1" type="primary">frr</name>
    <name type="ordered locus">NSE_0945</name>
</gene>
<proteinExistence type="inferred from homology"/>
<name>RRF_NEOSM</name>
<dbReference type="EMBL" id="CP000237">
    <property type="protein sequence ID" value="ABD45791.1"/>
    <property type="molecule type" value="Genomic_DNA"/>
</dbReference>
<dbReference type="RefSeq" id="WP_011452315.1">
    <property type="nucleotide sequence ID" value="NC_007798.1"/>
</dbReference>
<dbReference type="SMR" id="Q2GCI7"/>
<dbReference type="STRING" id="222891.NSE_0945"/>
<dbReference type="KEGG" id="nse:NSE_0945"/>
<dbReference type="eggNOG" id="COG0233">
    <property type="taxonomic scope" value="Bacteria"/>
</dbReference>
<dbReference type="HOGENOM" id="CLU_073981_2_1_5"/>
<dbReference type="OrthoDB" id="9804006at2"/>
<dbReference type="Proteomes" id="UP000001942">
    <property type="component" value="Chromosome"/>
</dbReference>
<dbReference type="GO" id="GO:0005737">
    <property type="term" value="C:cytoplasm"/>
    <property type="evidence" value="ECO:0007669"/>
    <property type="project" value="UniProtKB-SubCell"/>
</dbReference>
<dbReference type="GO" id="GO:0043023">
    <property type="term" value="F:ribosomal large subunit binding"/>
    <property type="evidence" value="ECO:0007669"/>
    <property type="project" value="TreeGrafter"/>
</dbReference>
<dbReference type="GO" id="GO:0006415">
    <property type="term" value="P:translational termination"/>
    <property type="evidence" value="ECO:0007669"/>
    <property type="project" value="UniProtKB-UniRule"/>
</dbReference>
<dbReference type="FunFam" id="1.10.132.20:FF:000001">
    <property type="entry name" value="Ribosome-recycling factor"/>
    <property type="match status" value="1"/>
</dbReference>
<dbReference type="FunFam" id="3.30.1360.40:FF:000001">
    <property type="entry name" value="Ribosome-recycling factor"/>
    <property type="match status" value="1"/>
</dbReference>
<dbReference type="Gene3D" id="3.30.1360.40">
    <property type="match status" value="1"/>
</dbReference>
<dbReference type="Gene3D" id="1.10.132.20">
    <property type="entry name" value="Ribosome-recycling factor"/>
    <property type="match status" value="1"/>
</dbReference>
<dbReference type="HAMAP" id="MF_00040">
    <property type="entry name" value="RRF"/>
    <property type="match status" value="1"/>
</dbReference>
<dbReference type="InterPro" id="IPR002661">
    <property type="entry name" value="Ribosome_recyc_fac"/>
</dbReference>
<dbReference type="InterPro" id="IPR023584">
    <property type="entry name" value="Ribosome_recyc_fac_dom"/>
</dbReference>
<dbReference type="InterPro" id="IPR036191">
    <property type="entry name" value="RRF_sf"/>
</dbReference>
<dbReference type="NCBIfam" id="TIGR00496">
    <property type="entry name" value="frr"/>
    <property type="match status" value="1"/>
</dbReference>
<dbReference type="PANTHER" id="PTHR20982:SF3">
    <property type="entry name" value="MITOCHONDRIAL RIBOSOME RECYCLING FACTOR PSEUDO 1"/>
    <property type="match status" value="1"/>
</dbReference>
<dbReference type="PANTHER" id="PTHR20982">
    <property type="entry name" value="RIBOSOME RECYCLING FACTOR"/>
    <property type="match status" value="1"/>
</dbReference>
<dbReference type="Pfam" id="PF01765">
    <property type="entry name" value="RRF"/>
    <property type="match status" value="1"/>
</dbReference>
<dbReference type="SUPFAM" id="SSF55194">
    <property type="entry name" value="Ribosome recycling factor, RRF"/>
    <property type="match status" value="1"/>
</dbReference>
<keyword id="KW-0963">Cytoplasm</keyword>
<keyword id="KW-0648">Protein biosynthesis</keyword>
<evidence type="ECO:0000255" key="1">
    <source>
        <dbReference type="HAMAP-Rule" id="MF_00040"/>
    </source>
</evidence>
<accession>Q2GCI7</accession>